<name>FTSB_GLAP5</name>
<reference key="1">
    <citation type="journal article" date="2009" name="J. Bacteriol.">
        <title>Complete genome sequence of Haemophilus parasuis SH0165.</title>
        <authorList>
            <person name="Yue M."/>
            <person name="Yang F."/>
            <person name="Yang J."/>
            <person name="Bei W."/>
            <person name="Cai X."/>
            <person name="Chen L."/>
            <person name="Dong J."/>
            <person name="Zhou R."/>
            <person name="Jin M."/>
            <person name="Jin Q."/>
            <person name="Chen H."/>
        </authorList>
    </citation>
    <scope>NUCLEOTIDE SEQUENCE [LARGE SCALE GENOMIC DNA]</scope>
    <source>
        <strain>SH0165</strain>
    </source>
</reference>
<dbReference type="EMBL" id="CP001321">
    <property type="protein sequence ID" value="ACL32362.1"/>
    <property type="molecule type" value="Genomic_DNA"/>
</dbReference>
<dbReference type="RefSeq" id="WP_012621879.1">
    <property type="nucleotide sequence ID" value="NC_011852.1"/>
</dbReference>
<dbReference type="SMR" id="B8F4W0"/>
<dbReference type="STRING" id="557723.HAPS_0716"/>
<dbReference type="KEGG" id="hap:HAPS_0716"/>
<dbReference type="HOGENOM" id="CLU_134863_5_2_6"/>
<dbReference type="Proteomes" id="UP000006743">
    <property type="component" value="Chromosome"/>
</dbReference>
<dbReference type="GO" id="GO:0032153">
    <property type="term" value="C:cell division site"/>
    <property type="evidence" value="ECO:0007669"/>
    <property type="project" value="UniProtKB-UniRule"/>
</dbReference>
<dbReference type="GO" id="GO:0030428">
    <property type="term" value="C:cell septum"/>
    <property type="evidence" value="ECO:0007669"/>
    <property type="project" value="TreeGrafter"/>
</dbReference>
<dbReference type="GO" id="GO:0005886">
    <property type="term" value="C:plasma membrane"/>
    <property type="evidence" value="ECO:0007669"/>
    <property type="project" value="UniProtKB-SubCell"/>
</dbReference>
<dbReference type="GO" id="GO:0043093">
    <property type="term" value="P:FtsZ-dependent cytokinesis"/>
    <property type="evidence" value="ECO:0007669"/>
    <property type="project" value="UniProtKB-UniRule"/>
</dbReference>
<dbReference type="Gene3D" id="1.20.5.400">
    <property type="match status" value="1"/>
</dbReference>
<dbReference type="HAMAP" id="MF_00599">
    <property type="entry name" value="FtsB"/>
    <property type="match status" value="1"/>
</dbReference>
<dbReference type="InterPro" id="IPR023081">
    <property type="entry name" value="Cell_div_FtsB"/>
</dbReference>
<dbReference type="InterPro" id="IPR007060">
    <property type="entry name" value="FtsL/DivIC"/>
</dbReference>
<dbReference type="NCBIfam" id="NF002058">
    <property type="entry name" value="PRK00888.1"/>
    <property type="match status" value="1"/>
</dbReference>
<dbReference type="PANTHER" id="PTHR37485">
    <property type="entry name" value="CELL DIVISION PROTEIN FTSB"/>
    <property type="match status" value="1"/>
</dbReference>
<dbReference type="PANTHER" id="PTHR37485:SF1">
    <property type="entry name" value="CELL DIVISION PROTEIN FTSB"/>
    <property type="match status" value="1"/>
</dbReference>
<dbReference type="Pfam" id="PF04977">
    <property type="entry name" value="DivIC"/>
    <property type="match status" value="1"/>
</dbReference>
<accession>B8F4W0</accession>
<sequence length="93" mass="10970">MRVLVVVLALLLGGFQYAFWFGQNGWNEYQQAKQEVSQLKETNQKLTARNQLIQAEIEDLKTGINALEERARLDREMVKPDETFYRIVPREQR</sequence>
<organism>
    <name type="scientific">Glaesserella parasuis serovar 5 (strain SH0165)</name>
    <name type="common">Haemophilus parasuis</name>
    <dbReference type="NCBI Taxonomy" id="557723"/>
    <lineage>
        <taxon>Bacteria</taxon>
        <taxon>Pseudomonadati</taxon>
        <taxon>Pseudomonadota</taxon>
        <taxon>Gammaproteobacteria</taxon>
        <taxon>Pasteurellales</taxon>
        <taxon>Pasteurellaceae</taxon>
        <taxon>Glaesserella</taxon>
    </lineage>
</organism>
<protein>
    <recommendedName>
        <fullName evidence="1">Cell division protein FtsB</fullName>
    </recommendedName>
</protein>
<comment type="function">
    <text evidence="1">Essential cell division protein. May link together the upstream cell division proteins, which are predominantly cytoplasmic, with the downstream cell division proteins, which are predominantly periplasmic.</text>
</comment>
<comment type="subunit">
    <text evidence="1">Part of a complex composed of FtsB, FtsL and FtsQ.</text>
</comment>
<comment type="subcellular location">
    <subcellularLocation>
        <location evidence="1">Cell inner membrane</location>
        <topology evidence="1">Single-pass type II membrane protein</topology>
    </subcellularLocation>
    <text evidence="1">Localizes to the division septum.</text>
</comment>
<comment type="similarity">
    <text evidence="1">Belongs to the FtsB family.</text>
</comment>
<keyword id="KW-0131">Cell cycle</keyword>
<keyword id="KW-0132">Cell division</keyword>
<keyword id="KW-0997">Cell inner membrane</keyword>
<keyword id="KW-1003">Cell membrane</keyword>
<keyword id="KW-0175">Coiled coil</keyword>
<keyword id="KW-0472">Membrane</keyword>
<keyword id="KW-1185">Reference proteome</keyword>
<keyword id="KW-0812">Transmembrane</keyword>
<keyword id="KW-1133">Transmembrane helix</keyword>
<gene>
    <name evidence="1" type="primary">ftsB</name>
    <name type="ordered locus">HAPS_0716</name>
</gene>
<evidence type="ECO:0000255" key="1">
    <source>
        <dbReference type="HAMAP-Rule" id="MF_00599"/>
    </source>
</evidence>
<feature type="chain" id="PRO_1000147006" description="Cell division protein FtsB">
    <location>
        <begin position="1"/>
        <end position="93"/>
    </location>
</feature>
<feature type="topological domain" description="Cytoplasmic" evidence="1">
    <location>
        <begin position="1"/>
        <end position="3"/>
    </location>
</feature>
<feature type="transmembrane region" description="Helical" evidence="1">
    <location>
        <begin position="4"/>
        <end position="21"/>
    </location>
</feature>
<feature type="topological domain" description="Periplasmic" evidence="1">
    <location>
        <begin position="22"/>
        <end position="93"/>
    </location>
</feature>
<feature type="coiled-coil region" evidence="1">
    <location>
        <begin position="26"/>
        <end position="76"/>
    </location>
</feature>
<proteinExistence type="inferred from homology"/>